<accession>B5XRA3</accession>
<organism>
    <name type="scientific">Klebsiella pneumoniae (strain 342)</name>
    <dbReference type="NCBI Taxonomy" id="507522"/>
    <lineage>
        <taxon>Bacteria</taxon>
        <taxon>Pseudomonadati</taxon>
        <taxon>Pseudomonadota</taxon>
        <taxon>Gammaproteobacteria</taxon>
        <taxon>Enterobacterales</taxon>
        <taxon>Enterobacteriaceae</taxon>
        <taxon>Klebsiella/Raoultella group</taxon>
        <taxon>Klebsiella</taxon>
        <taxon>Klebsiella pneumoniae complex</taxon>
    </lineage>
</organism>
<evidence type="ECO:0000255" key="1">
    <source>
        <dbReference type="HAMAP-Rule" id="MF_00650"/>
    </source>
</evidence>
<keyword id="KW-0548">Nucleotidyltransferase</keyword>
<keyword id="KW-0808">Transferase</keyword>
<feature type="chain" id="PRO_1000130986" description="Phosphoribosyl-dephospho-CoA transferase">
    <location>
        <begin position="1"/>
        <end position="205"/>
    </location>
</feature>
<feature type="active site" evidence="1">
    <location>
        <position position="134"/>
    </location>
</feature>
<feature type="active site" evidence="1">
    <location>
        <position position="136"/>
    </location>
</feature>
<reference key="1">
    <citation type="journal article" date="2008" name="PLoS Genet.">
        <title>Complete genome sequence of the N2-fixing broad host range endophyte Klebsiella pneumoniae 342 and virulence predictions verified in mice.</title>
        <authorList>
            <person name="Fouts D.E."/>
            <person name="Tyler H.L."/>
            <person name="DeBoy R.T."/>
            <person name="Daugherty S."/>
            <person name="Ren Q."/>
            <person name="Badger J.H."/>
            <person name="Durkin A.S."/>
            <person name="Huot H."/>
            <person name="Shrivastava S."/>
            <person name="Kothari S."/>
            <person name="Dodson R.J."/>
            <person name="Mohamoud Y."/>
            <person name="Khouri H."/>
            <person name="Roesch L.F.W."/>
            <person name="Krogfelt K.A."/>
            <person name="Struve C."/>
            <person name="Triplett E.W."/>
            <person name="Methe B.A."/>
        </authorList>
    </citation>
    <scope>NUCLEOTIDE SEQUENCE [LARGE SCALE GENOMIC DNA]</scope>
    <source>
        <strain>342</strain>
    </source>
</reference>
<dbReference type="EC" id="2.7.7.66" evidence="1"/>
<dbReference type="EMBL" id="CP000964">
    <property type="protein sequence ID" value="ACI08474.1"/>
    <property type="molecule type" value="Genomic_DNA"/>
</dbReference>
<dbReference type="KEGG" id="kpe:KPK_2900"/>
<dbReference type="HOGENOM" id="CLU_111981_0_0_6"/>
<dbReference type="Proteomes" id="UP000001734">
    <property type="component" value="Chromosome"/>
</dbReference>
<dbReference type="GO" id="GO:0016779">
    <property type="term" value="F:nucleotidyltransferase activity"/>
    <property type="evidence" value="ECO:0007669"/>
    <property type="project" value="UniProtKB-UniRule"/>
</dbReference>
<dbReference type="HAMAP" id="MF_00650">
    <property type="entry name" value="Malonate_MdcG"/>
    <property type="match status" value="1"/>
</dbReference>
<dbReference type="InterPro" id="IPR017557">
    <property type="entry name" value="Holo-ACP_synthase"/>
</dbReference>
<dbReference type="InterPro" id="IPR049180">
    <property type="entry name" value="MdcG_C"/>
</dbReference>
<dbReference type="InterPro" id="IPR048903">
    <property type="entry name" value="MdcG_N"/>
</dbReference>
<dbReference type="NCBIfam" id="TIGR03135">
    <property type="entry name" value="malonate_mdcG"/>
    <property type="match status" value="1"/>
</dbReference>
<dbReference type="NCBIfam" id="NF002332">
    <property type="entry name" value="PRK01293.1"/>
    <property type="match status" value="1"/>
</dbReference>
<dbReference type="Pfam" id="PF10620">
    <property type="entry name" value="MdcG"/>
    <property type="match status" value="1"/>
</dbReference>
<dbReference type="Pfam" id="PF20866">
    <property type="entry name" value="MdcG_N"/>
    <property type="match status" value="1"/>
</dbReference>
<name>MDCG_KLEP3</name>
<comment type="function">
    <text evidence="1">Transfers 2'-(5-triphosphoribosyl)-3'-dephosphocoenzyme-A to the apo-[acyl-carrier-protein] of the malonate decarboxylase to yield holo-[acyl-carrier-protein].</text>
</comment>
<comment type="catalytic activity">
    <reaction evidence="1">
        <text>apo-[malonate decarboxylase ACP] + 2'-(5''-triphospho-alpha-D-ribosyl)-3'-dephospho-CoA = holo-[malonate decarboxylase ACP] + diphosphate</text>
        <dbReference type="Rhea" id="RHEA:42644"/>
        <dbReference type="Rhea" id="RHEA-COMP:10160"/>
        <dbReference type="Rhea" id="RHEA-COMP:10161"/>
        <dbReference type="ChEBI" id="CHEBI:29999"/>
        <dbReference type="ChEBI" id="CHEBI:33019"/>
        <dbReference type="ChEBI" id="CHEBI:61378"/>
        <dbReference type="ChEBI" id="CHEBI:82683"/>
        <dbReference type="EC" id="2.7.7.66"/>
    </reaction>
</comment>
<comment type="similarity">
    <text evidence="1">Belongs to the MdcG family.</text>
</comment>
<protein>
    <recommendedName>
        <fullName evidence="1">Phosphoribosyl-dephospho-CoA transferase</fullName>
        <ecNumber evidence="1">2.7.7.66</ecNumber>
    </recommendedName>
    <alternativeName>
        <fullName evidence="1">Malonate decarboxylase holo-[acyl-carrier-protein] synthase</fullName>
        <shortName evidence="1">Holo-ACP synthase</shortName>
    </alternativeName>
</protein>
<gene>
    <name evidence="1" type="primary">mdcG</name>
    <name type="ordered locus">KPK_2900</name>
</gene>
<proteinExistence type="inferred from homology"/>
<sequence length="205" mass="23011">MSSTPRPHDLVWLNHASALEAIAEPWVAQQWRAALPVVVRRDVDDQARIPVGVRGMKREQRAAGWVQAHNIVRCVTPEMLVERERLLGSPFVSQPPVQAAIALTLHPWSWRWGVTGSTGYALATEIPVLHAASDLDLLIRAPQPLDREALREWLARVAQLPCRADTQVETPYGAFALNEWLRDGRALLKTSHGARLTATPWHREE</sequence>